<organism>
    <name type="scientific">Xenopus laevis</name>
    <name type="common">African clawed frog</name>
    <dbReference type="NCBI Taxonomy" id="8355"/>
    <lineage>
        <taxon>Eukaryota</taxon>
        <taxon>Metazoa</taxon>
        <taxon>Chordata</taxon>
        <taxon>Craniata</taxon>
        <taxon>Vertebrata</taxon>
        <taxon>Euteleostomi</taxon>
        <taxon>Amphibia</taxon>
        <taxon>Batrachia</taxon>
        <taxon>Anura</taxon>
        <taxon>Pipoidea</taxon>
        <taxon>Pipidae</taxon>
        <taxon>Xenopodinae</taxon>
        <taxon>Xenopus</taxon>
        <taxon>Xenopus</taxon>
    </lineage>
</organism>
<keyword id="KW-1003">Cell membrane</keyword>
<keyword id="KW-0157">Chromophore</keyword>
<keyword id="KW-1015">Disulfide bond</keyword>
<keyword id="KW-0297">G-protein coupled receptor</keyword>
<keyword id="KW-0325">Glycoprotein</keyword>
<keyword id="KW-0472">Membrane</keyword>
<keyword id="KW-0600">Photoreceptor protein</keyword>
<keyword id="KW-0675">Receptor</keyword>
<keyword id="KW-1185">Reference proteome</keyword>
<keyword id="KW-0681">Retinal protein</keyword>
<keyword id="KW-0716">Sensory transduction</keyword>
<keyword id="KW-0807">Transducer</keyword>
<keyword id="KW-0812">Transmembrane</keyword>
<keyword id="KW-1133">Transmembrane helix</keyword>
<reference evidence="8 9" key="1">
    <citation type="journal article" date="1998" name="Proc. Natl. Acad. Sci. U.S.A.">
        <title>Melanopsin: an opsin in melanophores, brain, and eye.</title>
        <authorList>
            <person name="Provencio I."/>
            <person name="Jiang G."/>
            <person name="De Grip W.J."/>
            <person name="Hayes W.P."/>
            <person name="Rollag M.D."/>
        </authorList>
    </citation>
    <scope>NUCLEOTIDE SEQUENCE [MRNA]</scope>
    <scope>TISSUE SPECIFICITY</scope>
    <source>
        <tissue evidence="7">Skin</tissue>
    </source>
</reference>
<evidence type="ECO:0000250" key="1"/>
<evidence type="ECO:0000250" key="2">
    <source>
        <dbReference type="UniProtKB" id="Q804Q2"/>
    </source>
</evidence>
<evidence type="ECO:0000250" key="3">
    <source>
        <dbReference type="UniProtKB" id="Q9QXZ9"/>
    </source>
</evidence>
<evidence type="ECO:0000255" key="4"/>
<evidence type="ECO:0000255" key="5">
    <source>
        <dbReference type="PROSITE-ProRule" id="PRU00521"/>
    </source>
</evidence>
<evidence type="ECO:0000256" key="6">
    <source>
        <dbReference type="SAM" id="MobiDB-lite"/>
    </source>
</evidence>
<evidence type="ECO:0000269" key="7">
    <source>
    </source>
</evidence>
<evidence type="ECO:0000305" key="8"/>
<evidence type="ECO:0000312" key="9">
    <source>
        <dbReference type="EMBL" id="AAC41235.1"/>
    </source>
</evidence>
<dbReference type="EMBL" id="AF014797">
    <property type="protein sequence ID" value="AAC41235.1"/>
    <property type="molecule type" value="mRNA"/>
</dbReference>
<dbReference type="RefSeq" id="NP_001079143.1">
    <property type="nucleotide sequence ID" value="NM_001085674.1"/>
</dbReference>
<dbReference type="SMR" id="O57422"/>
<dbReference type="TCDB" id="9.A.14.1.7">
    <property type="family name" value="the g-protein-coupled receptor (gpcr) family"/>
</dbReference>
<dbReference type="GlyCosmos" id="O57422">
    <property type="glycosylation" value="1 site, No reported glycans"/>
</dbReference>
<dbReference type="GeneID" id="373689"/>
<dbReference type="KEGG" id="xla:373689"/>
<dbReference type="AGR" id="Xenbase:XB-GENE-5957217"/>
<dbReference type="CTD" id="373689"/>
<dbReference type="Xenbase" id="XB-GENE-5957217">
    <property type="gene designation" value="opn4xb.L"/>
</dbReference>
<dbReference type="OMA" id="QASENHR"/>
<dbReference type="OrthoDB" id="9996086at2759"/>
<dbReference type="Proteomes" id="UP000186698">
    <property type="component" value="Chromosome 1L"/>
</dbReference>
<dbReference type="Bgee" id="373689">
    <property type="expression patterns" value="Expressed in camera-type eye and 1 other cell type or tissue"/>
</dbReference>
<dbReference type="GO" id="GO:0005886">
    <property type="term" value="C:plasma membrane"/>
    <property type="evidence" value="ECO:0000250"/>
    <property type="project" value="UniProtKB"/>
</dbReference>
<dbReference type="GO" id="GO:0008020">
    <property type="term" value="F:G protein-coupled photoreceptor activity"/>
    <property type="evidence" value="ECO:0000318"/>
    <property type="project" value="GO_Central"/>
</dbReference>
<dbReference type="GO" id="GO:0071482">
    <property type="term" value="P:cellular response to light stimulus"/>
    <property type="evidence" value="ECO:0000318"/>
    <property type="project" value="GO_Central"/>
</dbReference>
<dbReference type="GO" id="GO:0007186">
    <property type="term" value="P:G protein-coupled receptor signaling pathway"/>
    <property type="evidence" value="ECO:0000318"/>
    <property type="project" value="GO_Central"/>
</dbReference>
<dbReference type="GO" id="GO:0007602">
    <property type="term" value="P:phototransduction"/>
    <property type="evidence" value="ECO:0000318"/>
    <property type="project" value="GO_Central"/>
</dbReference>
<dbReference type="GO" id="GO:0007601">
    <property type="term" value="P:visual perception"/>
    <property type="evidence" value="ECO:0007669"/>
    <property type="project" value="InterPro"/>
</dbReference>
<dbReference type="CDD" id="cd15336">
    <property type="entry name" value="7tmA_Melanopsin"/>
    <property type="match status" value="1"/>
</dbReference>
<dbReference type="FunFam" id="1.20.1070.10:FF:000044">
    <property type="entry name" value="Opsin, ultraviolet-sensitive"/>
    <property type="match status" value="1"/>
</dbReference>
<dbReference type="Gene3D" id="1.20.1070.10">
    <property type="entry name" value="Rhodopsin 7-helix transmembrane proteins"/>
    <property type="match status" value="1"/>
</dbReference>
<dbReference type="InterPro" id="IPR050125">
    <property type="entry name" value="GPCR_opsins"/>
</dbReference>
<dbReference type="InterPro" id="IPR000276">
    <property type="entry name" value="GPCR_Rhodpsn"/>
</dbReference>
<dbReference type="InterPro" id="IPR017452">
    <property type="entry name" value="GPCR_Rhodpsn_7TM"/>
</dbReference>
<dbReference type="InterPro" id="IPR001760">
    <property type="entry name" value="Opsin"/>
</dbReference>
<dbReference type="InterPro" id="IPR027430">
    <property type="entry name" value="Retinal_BS"/>
</dbReference>
<dbReference type="PANTHER" id="PTHR24240">
    <property type="entry name" value="OPSIN"/>
    <property type="match status" value="1"/>
</dbReference>
<dbReference type="Pfam" id="PF00001">
    <property type="entry name" value="7tm_1"/>
    <property type="match status" value="1"/>
</dbReference>
<dbReference type="PRINTS" id="PR00237">
    <property type="entry name" value="GPCRRHODOPSN"/>
</dbReference>
<dbReference type="PRINTS" id="PR00238">
    <property type="entry name" value="OPSIN"/>
</dbReference>
<dbReference type="SMART" id="SM01381">
    <property type="entry name" value="7TM_GPCR_Srsx"/>
    <property type="match status" value="1"/>
</dbReference>
<dbReference type="SUPFAM" id="SSF81321">
    <property type="entry name" value="Family A G protein-coupled receptor-like"/>
    <property type="match status" value="1"/>
</dbReference>
<dbReference type="PROSITE" id="PS00237">
    <property type="entry name" value="G_PROTEIN_RECEP_F1_1"/>
    <property type="match status" value="1"/>
</dbReference>
<dbReference type="PROSITE" id="PS50262">
    <property type="entry name" value="G_PROTEIN_RECEP_F1_2"/>
    <property type="match status" value="1"/>
</dbReference>
<dbReference type="PROSITE" id="PS00238">
    <property type="entry name" value="OPSIN"/>
    <property type="match status" value="1"/>
</dbReference>
<accession>O57422</accession>
<sequence length="534" mass="60344">MDLGKTVEYGTHRQDAIAQIDVPDQVLYTIGSFILIIGSVGIIGNMLVLYAFYRNKKLRTAPNYFIINLAISDFLMSATQAPVCFLSSLHREWILGDIGCNVYAFCGALFGITSMMTLLAISINRYIVITKPLQSIQWSSKKRTSQIIVLVWMYSLMWSLAPLLGWSSYVPEGLRISCTWDYVTSTMSNRSYTMMLCCCVFFIPLIVISHCYLFMFLAIRSTGRNVQKLGSYGRQSFLSQSMKNEWKMAKIAFVIIIVFVLSWSPYACVTLIAWAGHGKSLTPYSKTVPAVIAKASAIYNPIIYGIIHPKYRETIHKTVPCLRFLIREPKKDIFESSVRGSIYGRQSASRKKNSFISTVSTAETVSSHIWDNTPNGHWDRKSLSQTMSNLCSPLLQDPNSSHTLEQTLTWPDDPSPKEILLPSSLKSVTYPIGLESIVKDEHTNNSCVRNHRVDKSGGLDWIINATLPRIVIIPTSESNISETKEEHDNNSEEKSKRTEEEEDFFNFHVDTSLLNLEGLNSSTDLYEVVERFLS</sequence>
<name>OPN4B_XENLA</name>
<feature type="chain" id="PRO_0000271892" description="Melanopsin-B">
    <location>
        <begin position="1"/>
        <end position="534"/>
    </location>
</feature>
<feature type="topological domain" description="Extracellular" evidence="4">
    <location>
        <begin position="1"/>
        <end position="32"/>
    </location>
</feature>
<feature type="transmembrane region" description="Helical; Name=1" evidence="4">
    <location>
        <begin position="33"/>
        <end position="53"/>
    </location>
</feature>
<feature type="topological domain" description="Cytoplasmic" evidence="4">
    <location>
        <begin position="54"/>
        <end position="64"/>
    </location>
</feature>
<feature type="transmembrane region" description="Helical; Name=2" evidence="4">
    <location>
        <begin position="65"/>
        <end position="85"/>
    </location>
</feature>
<feature type="topological domain" description="Extracellular" evidence="4">
    <location>
        <begin position="86"/>
        <end position="102"/>
    </location>
</feature>
<feature type="transmembrane region" description="Helical; Name=3" evidence="4">
    <location>
        <begin position="103"/>
        <end position="123"/>
    </location>
</feature>
<feature type="topological domain" description="Cytoplasmic" evidence="4">
    <location>
        <begin position="124"/>
        <end position="146"/>
    </location>
</feature>
<feature type="transmembrane region" description="Helical; Name=4" evidence="4">
    <location>
        <begin position="147"/>
        <end position="167"/>
    </location>
</feature>
<feature type="topological domain" description="Extracellular" evidence="4">
    <location>
        <begin position="168"/>
        <end position="198"/>
    </location>
</feature>
<feature type="transmembrane region" description="Helical; Name=5" evidence="4">
    <location>
        <begin position="199"/>
        <end position="219"/>
    </location>
</feature>
<feature type="topological domain" description="Cytoplasmic" evidence="4">
    <location>
        <begin position="220"/>
        <end position="250"/>
    </location>
</feature>
<feature type="transmembrane region" description="Helical; Name=6" evidence="4">
    <location>
        <begin position="251"/>
        <end position="271"/>
    </location>
</feature>
<feature type="topological domain" description="Extracellular" evidence="4">
    <location>
        <begin position="272"/>
        <end position="286"/>
    </location>
</feature>
<feature type="transmembrane region" description="Helical; Name=7" evidence="4">
    <location>
        <begin position="287"/>
        <end position="307"/>
    </location>
</feature>
<feature type="topological domain" description="Cytoplasmic" evidence="4">
    <location>
        <begin position="308"/>
        <end position="534"/>
    </location>
</feature>
<feature type="region of interest" description="Disordered" evidence="6">
    <location>
        <begin position="478"/>
        <end position="501"/>
    </location>
</feature>
<feature type="compositionally biased region" description="Basic and acidic residues" evidence="6">
    <location>
        <begin position="482"/>
        <end position="499"/>
    </location>
</feature>
<feature type="modified residue" description="N6-(retinylidene)lysine" evidence="1">
    <location>
        <position position="294"/>
    </location>
</feature>
<feature type="glycosylation site" description="N-linked (GlcNAc...) asparagine" evidence="4">
    <location>
        <position position="189"/>
    </location>
</feature>
<feature type="disulfide bond" evidence="5">
    <location>
        <begin position="100"/>
        <end position="178"/>
    </location>
</feature>
<gene>
    <name evidence="2" type="primary">opn4b</name>
    <name evidence="9" type="synonym">mop</name>
</gene>
<proteinExistence type="evidence at transcript level"/>
<protein>
    <recommendedName>
        <fullName>Melanopsin-B</fullName>
    </recommendedName>
    <alternativeName>
        <fullName>Opsin-4B</fullName>
        <shortName>xMOP</shortName>
    </alternativeName>
</protein>
<comment type="function">
    <text evidence="3">Photoreceptor implicated in non-image-forming responses to light. May be able to isomerize covalently bound all-trans retinal back to 11-cis retinal (By similarity).</text>
</comment>
<comment type="subcellular location">
    <subcellularLocation>
        <location evidence="3">Cell membrane</location>
        <topology evidence="4">Multi-pass membrane protein</topology>
    </subcellularLocation>
</comment>
<comment type="tissue specificity">
    <text evidence="7">Highest level in the iris, high level in the inner nuclear layer, possibly in horizontal cells, and lowest level in retinal pigment epithelium. Expressed in melanophore cells of the skin.</text>
</comment>
<comment type="similarity">
    <text evidence="5">Belongs to the G-protein coupled receptor 1 family. Opsin subfamily.</text>
</comment>